<proteinExistence type="predicted"/>
<organism evidence="6">
    <name type="scientific">Aspergillus fumigatus (strain CBS 144.89 / FGSC A1163 / CEA10)</name>
    <name type="common">Neosartorya fumigata</name>
    <dbReference type="NCBI Taxonomy" id="451804"/>
    <lineage>
        <taxon>Eukaryota</taxon>
        <taxon>Fungi</taxon>
        <taxon>Dikarya</taxon>
        <taxon>Ascomycota</taxon>
        <taxon>Pezizomycotina</taxon>
        <taxon>Eurotiomycetes</taxon>
        <taxon>Eurotiomycetidae</taxon>
        <taxon>Eurotiales</taxon>
        <taxon>Aspergillaceae</taxon>
        <taxon>Aspergillus</taxon>
        <taxon>Aspergillus subgen. Fumigati</taxon>
    </lineage>
</organism>
<sequence length="336" mass="36076">MDVASLISPSESDTVPTFRSRSIQNSSASHYKRLSEQSTGSYFSAVPTHTTSYSRTPQPPLSPPAEDQSKCSLPSISILLENADGAAAHAAKRQRNSLSTHRDSDPRPPYDSITPHAMPPTPPLRPGSGFHSNGHSPSTSSVSAASSSALMKNTESYPQAPIGLPSPTDRSSISSQGSVQHAASAPYASPAPSVSSFSSPIEPSTPSTAAYYQRNPAPNTFQNPSPFPQTSTASLPSPGHQQMISPVTPAWQHHHYFPPSSSTSYQQNHDRYICRTCHKAFSRPSSLRIHSHSHTGEKPFRCTHAGCGKAFSVRSNMKRHERGCHTGRPVATAMVQ</sequence>
<feature type="chain" id="PRO_0000435647" description="C2H2 finger domain transcription factor mtfA">
    <location>
        <begin position="1"/>
        <end position="336"/>
    </location>
</feature>
<feature type="zinc finger region" description="C2H2-type 1" evidence="1">
    <location>
        <begin position="272"/>
        <end position="294"/>
    </location>
</feature>
<feature type="zinc finger region" description="C2H2-type 2" evidence="1">
    <location>
        <begin position="300"/>
        <end position="325"/>
    </location>
</feature>
<feature type="region of interest" description="Disordered" evidence="2">
    <location>
        <begin position="1"/>
        <end position="245"/>
    </location>
</feature>
<feature type="compositionally biased region" description="Polar residues" evidence="2">
    <location>
        <begin position="7"/>
        <end position="29"/>
    </location>
</feature>
<feature type="compositionally biased region" description="Polar residues" evidence="2">
    <location>
        <begin position="36"/>
        <end position="56"/>
    </location>
</feature>
<feature type="compositionally biased region" description="Low complexity" evidence="2">
    <location>
        <begin position="136"/>
        <end position="149"/>
    </location>
</feature>
<feature type="compositionally biased region" description="Polar residues" evidence="2">
    <location>
        <begin position="168"/>
        <end position="181"/>
    </location>
</feature>
<feature type="compositionally biased region" description="Low complexity" evidence="2">
    <location>
        <begin position="182"/>
        <end position="210"/>
    </location>
</feature>
<feature type="compositionally biased region" description="Polar residues" evidence="2">
    <location>
        <begin position="216"/>
        <end position="245"/>
    </location>
</feature>
<protein>
    <recommendedName>
        <fullName evidence="5">C2H2 finger domain transcription factor mtfA</fullName>
    </recommendedName>
</protein>
<name>MTFA_ASPFC</name>
<gene>
    <name evidence="4" type="primary">mtfA</name>
    <name type="ORF">AFUB_095620</name>
</gene>
<dbReference type="EMBL" id="DS499602">
    <property type="protein sequence ID" value="EDP47711.1"/>
    <property type="molecule type" value="Genomic_DNA"/>
</dbReference>
<dbReference type="SMR" id="B0YDH7"/>
<dbReference type="EnsemblFungi" id="EDP47711">
    <property type="protein sequence ID" value="EDP47711"/>
    <property type="gene ID" value="AFUB_095620"/>
</dbReference>
<dbReference type="VEuPathDB" id="FungiDB:AFUB_095620"/>
<dbReference type="HOGENOM" id="CLU_053582_0_0_1"/>
<dbReference type="OrthoDB" id="128027at5052"/>
<dbReference type="PhylomeDB" id="B0YDH7"/>
<dbReference type="Proteomes" id="UP000001699">
    <property type="component" value="Unassembled WGS sequence"/>
</dbReference>
<dbReference type="GO" id="GO:0005634">
    <property type="term" value="C:nucleus"/>
    <property type="evidence" value="ECO:0007669"/>
    <property type="project" value="UniProtKB-SubCell"/>
</dbReference>
<dbReference type="GO" id="GO:0008270">
    <property type="term" value="F:zinc ion binding"/>
    <property type="evidence" value="ECO:0007669"/>
    <property type="project" value="UniProtKB-KW"/>
</dbReference>
<dbReference type="GO" id="GO:0010468">
    <property type="term" value="P:regulation of gene expression"/>
    <property type="evidence" value="ECO:0007669"/>
    <property type="project" value="TreeGrafter"/>
</dbReference>
<dbReference type="FunFam" id="3.30.160.60:FF:001176">
    <property type="entry name" value="C2H2 finger domain protein"/>
    <property type="match status" value="1"/>
</dbReference>
<dbReference type="Gene3D" id="3.30.160.60">
    <property type="entry name" value="Classic Zinc Finger"/>
    <property type="match status" value="2"/>
</dbReference>
<dbReference type="InterPro" id="IPR050331">
    <property type="entry name" value="Zinc_finger"/>
</dbReference>
<dbReference type="InterPro" id="IPR036236">
    <property type="entry name" value="Znf_C2H2_sf"/>
</dbReference>
<dbReference type="InterPro" id="IPR013087">
    <property type="entry name" value="Znf_C2H2_type"/>
</dbReference>
<dbReference type="PANTHER" id="PTHR16515:SF66">
    <property type="entry name" value="C2H2-TYPE DOMAIN-CONTAINING PROTEIN"/>
    <property type="match status" value="1"/>
</dbReference>
<dbReference type="PANTHER" id="PTHR16515">
    <property type="entry name" value="PR DOMAIN ZINC FINGER PROTEIN"/>
    <property type="match status" value="1"/>
</dbReference>
<dbReference type="Pfam" id="PF00096">
    <property type="entry name" value="zf-C2H2"/>
    <property type="match status" value="2"/>
</dbReference>
<dbReference type="SMART" id="SM00355">
    <property type="entry name" value="ZnF_C2H2"/>
    <property type="match status" value="2"/>
</dbReference>
<dbReference type="SUPFAM" id="SSF57667">
    <property type="entry name" value="beta-beta-alpha zinc fingers"/>
    <property type="match status" value="1"/>
</dbReference>
<dbReference type="PROSITE" id="PS00028">
    <property type="entry name" value="ZINC_FINGER_C2H2_1"/>
    <property type="match status" value="2"/>
</dbReference>
<dbReference type="PROSITE" id="PS50157">
    <property type="entry name" value="ZINC_FINGER_C2H2_2"/>
    <property type="match status" value="2"/>
</dbReference>
<keyword id="KW-0479">Metal-binding</keyword>
<keyword id="KW-0539">Nucleus</keyword>
<keyword id="KW-0677">Repeat</keyword>
<keyword id="KW-0804">Transcription</keyword>
<keyword id="KW-0805">Transcription regulation</keyword>
<keyword id="KW-0843">Virulence</keyword>
<keyword id="KW-0862">Zinc</keyword>
<keyword id="KW-0863">Zinc-finger</keyword>
<reference key="1">
    <citation type="journal article" date="2008" name="PLoS Genet.">
        <title>Genomic islands in the pathogenic filamentous fungus Aspergillus fumigatus.</title>
        <authorList>
            <person name="Fedorova N.D."/>
            <person name="Khaldi N."/>
            <person name="Joardar V.S."/>
            <person name="Maiti R."/>
            <person name="Amedeo P."/>
            <person name="Anderson M.J."/>
            <person name="Crabtree J."/>
            <person name="Silva J.C."/>
            <person name="Badger J.H."/>
            <person name="Albarraq A."/>
            <person name="Angiuoli S."/>
            <person name="Bussey H."/>
            <person name="Bowyer P."/>
            <person name="Cotty P.J."/>
            <person name="Dyer P.S."/>
            <person name="Egan A."/>
            <person name="Galens K."/>
            <person name="Fraser-Liggett C.M."/>
            <person name="Haas B.J."/>
            <person name="Inman J.M."/>
            <person name="Kent R."/>
            <person name="Lemieux S."/>
            <person name="Malavazi I."/>
            <person name="Orvis J."/>
            <person name="Roemer T."/>
            <person name="Ronning C.M."/>
            <person name="Sundaram J.P."/>
            <person name="Sutton G."/>
            <person name="Turner G."/>
            <person name="Venter J.C."/>
            <person name="White O.R."/>
            <person name="Whitty B.R."/>
            <person name="Youngman P."/>
            <person name="Wolfe K.H."/>
            <person name="Goldman G.H."/>
            <person name="Wortman J.R."/>
            <person name="Jiang B."/>
            <person name="Denning D.W."/>
            <person name="Nierman W.C."/>
        </authorList>
    </citation>
    <scope>NUCLEOTIDE SEQUENCE [LARGE SCALE GENOMIC DNA]</scope>
    <source>
        <strain>CBS 144.89 / FGSC A1163 / CEA10</strain>
    </source>
</reference>
<reference key="2">
    <citation type="journal article" date="2014" name="Eukaryot. Cell">
        <title>The mtfA transcription factor gene controls morphogenesis, gliotoxin production, and virulence in the opportunistic human pathogen Aspergillus fumigatus.</title>
        <authorList>
            <person name="Smith T.D."/>
            <person name="Calvo A.M."/>
        </authorList>
    </citation>
    <scope>FUNCTION</scope>
    <scope>DISRUPTION PHENOTYPE</scope>
    <scope>SUBCELLULAR LOCATION</scope>
    <source>
        <strain>CBS 144.89 / FGSC A1163 / CEA10</strain>
    </source>
</reference>
<accession>B0YDH7</accession>
<evidence type="ECO:0000255" key="1">
    <source>
        <dbReference type="PROSITE-ProRule" id="PRU00042"/>
    </source>
</evidence>
<evidence type="ECO:0000256" key="2">
    <source>
        <dbReference type="SAM" id="MobiDB-lite"/>
    </source>
</evidence>
<evidence type="ECO:0000269" key="3">
    <source>
    </source>
</evidence>
<evidence type="ECO:0000303" key="4">
    <source>
    </source>
</evidence>
<evidence type="ECO:0000305" key="5"/>
<evidence type="ECO:0000312" key="6">
    <source>
        <dbReference type="Proteomes" id="UP000001699"/>
    </source>
</evidence>
<comment type="function">
    <text evidence="3">Transcription factor that controls morphogenesis and virulence. Acts as a positive regulator of gliotixin and protease production.</text>
</comment>
<comment type="subcellular location">
    <subcellularLocation>
        <location evidence="3">Nucleus</location>
    </subcellularLocation>
</comment>
<comment type="disruption phenotype">
    <text evidence="3">Leads to a reduction of protease activity and a decreased virulence in a G.mellonella infection model.</text>
</comment>